<gene>
    <name evidence="1" type="primary">rplN</name>
    <name type="ordered locus">RPR_06180</name>
</gene>
<protein>
    <recommendedName>
        <fullName evidence="1">Large ribosomal subunit protein uL14</fullName>
    </recommendedName>
    <alternativeName>
        <fullName evidence="2">50S ribosomal protein L14</fullName>
    </alternativeName>
</protein>
<evidence type="ECO:0000255" key="1">
    <source>
        <dbReference type="HAMAP-Rule" id="MF_01367"/>
    </source>
</evidence>
<evidence type="ECO:0000305" key="2"/>
<organism>
    <name type="scientific">Rickettsia peacockii (strain Rustic)</name>
    <dbReference type="NCBI Taxonomy" id="562019"/>
    <lineage>
        <taxon>Bacteria</taxon>
        <taxon>Pseudomonadati</taxon>
        <taxon>Pseudomonadota</taxon>
        <taxon>Alphaproteobacteria</taxon>
        <taxon>Rickettsiales</taxon>
        <taxon>Rickettsiaceae</taxon>
        <taxon>Rickettsieae</taxon>
        <taxon>Rickettsia</taxon>
        <taxon>spotted fever group</taxon>
    </lineage>
</organism>
<proteinExistence type="inferred from homology"/>
<name>RL14_RICPU</name>
<reference key="1">
    <citation type="journal article" date="2009" name="PLoS ONE">
        <title>Genome sequence of the endosymbiont Rickettsia peacockii and comparison with virulent Rickettsia rickettsii: identification of virulence factors.</title>
        <authorList>
            <person name="Felsheim R.F."/>
            <person name="Kurtti T.J."/>
            <person name="Munderloh U.G."/>
        </authorList>
    </citation>
    <scope>NUCLEOTIDE SEQUENCE [LARGE SCALE GENOMIC DNA]</scope>
    <source>
        <strain>Rustic</strain>
    </source>
</reference>
<dbReference type="EMBL" id="CP001227">
    <property type="protein sequence ID" value="ACR47766.1"/>
    <property type="molecule type" value="Genomic_DNA"/>
</dbReference>
<dbReference type="RefSeq" id="WP_004997813.1">
    <property type="nucleotide sequence ID" value="NC_012730.1"/>
</dbReference>
<dbReference type="SMR" id="C4K2G9"/>
<dbReference type="GeneID" id="95361476"/>
<dbReference type="KEGG" id="rpk:RPR_06180"/>
<dbReference type="HOGENOM" id="CLU_095071_2_1_5"/>
<dbReference type="Proteomes" id="UP000005015">
    <property type="component" value="Chromosome"/>
</dbReference>
<dbReference type="GO" id="GO:0022625">
    <property type="term" value="C:cytosolic large ribosomal subunit"/>
    <property type="evidence" value="ECO:0007669"/>
    <property type="project" value="TreeGrafter"/>
</dbReference>
<dbReference type="GO" id="GO:0070180">
    <property type="term" value="F:large ribosomal subunit rRNA binding"/>
    <property type="evidence" value="ECO:0007669"/>
    <property type="project" value="TreeGrafter"/>
</dbReference>
<dbReference type="GO" id="GO:0003735">
    <property type="term" value="F:structural constituent of ribosome"/>
    <property type="evidence" value="ECO:0007669"/>
    <property type="project" value="InterPro"/>
</dbReference>
<dbReference type="GO" id="GO:0006412">
    <property type="term" value="P:translation"/>
    <property type="evidence" value="ECO:0007669"/>
    <property type="project" value="UniProtKB-UniRule"/>
</dbReference>
<dbReference type="CDD" id="cd00337">
    <property type="entry name" value="Ribosomal_uL14"/>
    <property type="match status" value="1"/>
</dbReference>
<dbReference type="FunFam" id="2.40.150.20:FF:000001">
    <property type="entry name" value="50S ribosomal protein L14"/>
    <property type="match status" value="1"/>
</dbReference>
<dbReference type="Gene3D" id="2.40.150.20">
    <property type="entry name" value="Ribosomal protein L14"/>
    <property type="match status" value="1"/>
</dbReference>
<dbReference type="HAMAP" id="MF_01367">
    <property type="entry name" value="Ribosomal_uL14"/>
    <property type="match status" value="1"/>
</dbReference>
<dbReference type="InterPro" id="IPR000218">
    <property type="entry name" value="Ribosomal_uL14"/>
</dbReference>
<dbReference type="InterPro" id="IPR005745">
    <property type="entry name" value="Ribosomal_uL14_bac-type"/>
</dbReference>
<dbReference type="InterPro" id="IPR019972">
    <property type="entry name" value="Ribosomal_uL14_CS"/>
</dbReference>
<dbReference type="InterPro" id="IPR036853">
    <property type="entry name" value="Ribosomal_uL14_sf"/>
</dbReference>
<dbReference type="NCBIfam" id="TIGR01067">
    <property type="entry name" value="rplN_bact"/>
    <property type="match status" value="1"/>
</dbReference>
<dbReference type="PANTHER" id="PTHR11761">
    <property type="entry name" value="50S/60S RIBOSOMAL PROTEIN L14/L23"/>
    <property type="match status" value="1"/>
</dbReference>
<dbReference type="PANTHER" id="PTHR11761:SF3">
    <property type="entry name" value="LARGE RIBOSOMAL SUBUNIT PROTEIN UL14M"/>
    <property type="match status" value="1"/>
</dbReference>
<dbReference type="Pfam" id="PF00238">
    <property type="entry name" value="Ribosomal_L14"/>
    <property type="match status" value="1"/>
</dbReference>
<dbReference type="SMART" id="SM01374">
    <property type="entry name" value="Ribosomal_L14"/>
    <property type="match status" value="1"/>
</dbReference>
<dbReference type="SUPFAM" id="SSF50193">
    <property type="entry name" value="Ribosomal protein L14"/>
    <property type="match status" value="1"/>
</dbReference>
<dbReference type="PROSITE" id="PS00049">
    <property type="entry name" value="RIBOSOMAL_L14"/>
    <property type="match status" value="1"/>
</dbReference>
<accession>C4K2G9</accession>
<sequence>MIQMQSILEVADNSGAKKVMCIKVLGGSHHMVAKLGDVIVVSVKDAIPGGKVKKGDVYKGVIVRTKTGVVRPDGSTIKFDQNALVLLNKQDEPIGTRVFGPVTRELRAKKYVRIMSLAEEVL</sequence>
<keyword id="KW-0687">Ribonucleoprotein</keyword>
<keyword id="KW-0689">Ribosomal protein</keyword>
<keyword id="KW-0694">RNA-binding</keyword>
<keyword id="KW-0699">rRNA-binding</keyword>
<feature type="chain" id="PRO_1000214991" description="Large ribosomal subunit protein uL14">
    <location>
        <begin position="1"/>
        <end position="122"/>
    </location>
</feature>
<comment type="function">
    <text evidence="1">Binds to 23S rRNA. Forms part of two intersubunit bridges in the 70S ribosome.</text>
</comment>
<comment type="subunit">
    <text evidence="1">Part of the 50S ribosomal subunit. Forms a cluster with proteins L3 and L19. In the 70S ribosome, L14 and L19 interact and together make contacts with the 16S rRNA in bridges B5 and B8.</text>
</comment>
<comment type="similarity">
    <text evidence="1">Belongs to the universal ribosomal protein uL14 family.</text>
</comment>